<sequence>MNKTSVPSIDSIERQWFLVDAENQTLGRLATEVASVLRGKNKPSFTPHLDTGDFVVVVNADKIRVSGNKANQKLYRRHSGRPGGMKVETFQALQDRLPERIVEKAIKGMLPHNALGRQLFRKLKVYRGPEHPHSAQRPQTLQLNPAASSQ</sequence>
<comment type="function">
    <text evidence="1">This protein is one of the early assembly proteins of the 50S ribosomal subunit, although it is not seen to bind rRNA by itself. It is important during the early stages of 50S assembly.</text>
</comment>
<comment type="subunit">
    <text evidence="1">Part of the 50S ribosomal subunit.</text>
</comment>
<comment type="similarity">
    <text evidence="1">Belongs to the universal ribosomal protein uL13 family.</text>
</comment>
<feature type="chain" id="PRO_0000261766" description="Large ribosomal subunit protein uL13">
    <location>
        <begin position="1"/>
        <end position="150"/>
    </location>
</feature>
<feature type="region of interest" description="Disordered" evidence="2">
    <location>
        <begin position="129"/>
        <end position="150"/>
    </location>
</feature>
<feature type="compositionally biased region" description="Polar residues" evidence="2">
    <location>
        <begin position="136"/>
        <end position="150"/>
    </location>
</feature>
<keyword id="KW-1185">Reference proteome</keyword>
<keyword id="KW-0687">Ribonucleoprotein</keyword>
<keyword id="KW-0689">Ribosomal protein</keyword>
<evidence type="ECO:0000255" key="1">
    <source>
        <dbReference type="HAMAP-Rule" id="MF_01366"/>
    </source>
</evidence>
<evidence type="ECO:0000256" key="2">
    <source>
        <dbReference type="SAM" id="MobiDB-lite"/>
    </source>
</evidence>
<evidence type="ECO:0000305" key="3"/>
<reference key="1">
    <citation type="journal article" date="2003" name="Nature">
        <title>Genome divergence in two Prochlorococcus ecotypes reflects oceanic niche differentiation.</title>
        <authorList>
            <person name="Rocap G."/>
            <person name="Larimer F.W."/>
            <person name="Lamerdin J.E."/>
            <person name="Malfatti S."/>
            <person name="Chain P."/>
            <person name="Ahlgren N.A."/>
            <person name="Arellano A."/>
            <person name="Coleman M."/>
            <person name="Hauser L."/>
            <person name="Hess W.R."/>
            <person name="Johnson Z.I."/>
            <person name="Land M.L."/>
            <person name="Lindell D."/>
            <person name="Post A.F."/>
            <person name="Regala W."/>
            <person name="Shah M."/>
            <person name="Shaw S.L."/>
            <person name="Steglich C."/>
            <person name="Sullivan M.B."/>
            <person name="Ting C.S."/>
            <person name="Tolonen A."/>
            <person name="Webb E.A."/>
            <person name="Zinser E.R."/>
            <person name="Chisholm S.W."/>
        </authorList>
    </citation>
    <scope>NUCLEOTIDE SEQUENCE [LARGE SCALE GENOMIC DNA]</scope>
    <source>
        <strain>MIT 9313</strain>
    </source>
</reference>
<accession>Q7V521</accession>
<dbReference type="EMBL" id="BX548175">
    <property type="protein sequence ID" value="CAE21933.1"/>
    <property type="molecule type" value="Genomic_DNA"/>
</dbReference>
<dbReference type="RefSeq" id="WP_011131125.1">
    <property type="nucleotide sequence ID" value="NC_005071.1"/>
</dbReference>
<dbReference type="SMR" id="Q7V521"/>
<dbReference type="KEGG" id="pmt:PMT_1758"/>
<dbReference type="eggNOG" id="COG0102">
    <property type="taxonomic scope" value="Bacteria"/>
</dbReference>
<dbReference type="HOGENOM" id="CLU_082184_2_2_3"/>
<dbReference type="OrthoDB" id="9801330at2"/>
<dbReference type="Proteomes" id="UP000001423">
    <property type="component" value="Chromosome"/>
</dbReference>
<dbReference type="GO" id="GO:0022625">
    <property type="term" value="C:cytosolic large ribosomal subunit"/>
    <property type="evidence" value="ECO:0007669"/>
    <property type="project" value="TreeGrafter"/>
</dbReference>
<dbReference type="GO" id="GO:0003729">
    <property type="term" value="F:mRNA binding"/>
    <property type="evidence" value="ECO:0007669"/>
    <property type="project" value="TreeGrafter"/>
</dbReference>
<dbReference type="GO" id="GO:0003735">
    <property type="term" value="F:structural constituent of ribosome"/>
    <property type="evidence" value="ECO:0007669"/>
    <property type="project" value="InterPro"/>
</dbReference>
<dbReference type="GO" id="GO:0017148">
    <property type="term" value="P:negative regulation of translation"/>
    <property type="evidence" value="ECO:0007669"/>
    <property type="project" value="TreeGrafter"/>
</dbReference>
<dbReference type="GO" id="GO:0006412">
    <property type="term" value="P:translation"/>
    <property type="evidence" value="ECO:0007669"/>
    <property type="project" value="UniProtKB-UniRule"/>
</dbReference>
<dbReference type="CDD" id="cd00392">
    <property type="entry name" value="Ribosomal_L13"/>
    <property type="match status" value="1"/>
</dbReference>
<dbReference type="FunFam" id="3.90.1180.10:FF:000001">
    <property type="entry name" value="50S ribosomal protein L13"/>
    <property type="match status" value="1"/>
</dbReference>
<dbReference type="Gene3D" id="3.90.1180.10">
    <property type="entry name" value="Ribosomal protein L13"/>
    <property type="match status" value="1"/>
</dbReference>
<dbReference type="HAMAP" id="MF_01366">
    <property type="entry name" value="Ribosomal_uL13"/>
    <property type="match status" value="1"/>
</dbReference>
<dbReference type="InterPro" id="IPR005822">
    <property type="entry name" value="Ribosomal_uL13"/>
</dbReference>
<dbReference type="InterPro" id="IPR005823">
    <property type="entry name" value="Ribosomal_uL13_bac-type"/>
</dbReference>
<dbReference type="InterPro" id="IPR023563">
    <property type="entry name" value="Ribosomal_uL13_CS"/>
</dbReference>
<dbReference type="InterPro" id="IPR036899">
    <property type="entry name" value="Ribosomal_uL13_sf"/>
</dbReference>
<dbReference type="NCBIfam" id="TIGR01066">
    <property type="entry name" value="rplM_bact"/>
    <property type="match status" value="1"/>
</dbReference>
<dbReference type="PANTHER" id="PTHR11545:SF2">
    <property type="entry name" value="LARGE RIBOSOMAL SUBUNIT PROTEIN UL13M"/>
    <property type="match status" value="1"/>
</dbReference>
<dbReference type="PANTHER" id="PTHR11545">
    <property type="entry name" value="RIBOSOMAL PROTEIN L13"/>
    <property type="match status" value="1"/>
</dbReference>
<dbReference type="Pfam" id="PF00572">
    <property type="entry name" value="Ribosomal_L13"/>
    <property type="match status" value="1"/>
</dbReference>
<dbReference type="PIRSF" id="PIRSF002181">
    <property type="entry name" value="Ribosomal_L13"/>
    <property type="match status" value="1"/>
</dbReference>
<dbReference type="SUPFAM" id="SSF52161">
    <property type="entry name" value="Ribosomal protein L13"/>
    <property type="match status" value="1"/>
</dbReference>
<dbReference type="PROSITE" id="PS00783">
    <property type="entry name" value="RIBOSOMAL_L13"/>
    <property type="match status" value="1"/>
</dbReference>
<gene>
    <name evidence="1" type="primary">rplM</name>
    <name evidence="1" type="synonym">rpl13</name>
    <name type="ordered locus">PMT_1758</name>
</gene>
<name>RL13_PROMM</name>
<protein>
    <recommendedName>
        <fullName evidence="1">Large ribosomal subunit protein uL13</fullName>
    </recommendedName>
    <alternativeName>
        <fullName evidence="3">50S ribosomal protein L13</fullName>
    </alternativeName>
</protein>
<organism>
    <name type="scientific">Prochlorococcus marinus (strain MIT 9313)</name>
    <dbReference type="NCBI Taxonomy" id="74547"/>
    <lineage>
        <taxon>Bacteria</taxon>
        <taxon>Bacillati</taxon>
        <taxon>Cyanobacteriota</taxon>
        <taxon>Cyanophyceae</taxon>
        <taxon>Synechococcales</taxon>
        <taxon>Prochlorococcaceae</taxon>
        <taxon>Prochlorococcus</taxon>
    </lineage>
</organism>
<proteinExistence type="inferred from homology"/>